<accession>Q3SS13</accession>
<feature type="chain" id="PRO_0000250016" description="Anhydro-N-acetylmuramic acid kinase">
    <location>
        <begin position="1"/>
        <end position="366"/>
    </location>
</feature>
<feature type="binding site" evidence="1">
    <location>
        <begin position="10"/>
        <end position="17"/>
    </location>
    <ligand>
        <name>ATP</name>
        <dbReference type="ChEBI" id="CHEBI:30616"/>
    </ligand>
</feature>
<organism>
    <name type="scientific">Nitrobacter winogradskyi (strain ATCC 25391 / DSM 10237 / CIP 104748 / NCIMB 11846 / Nb-255)</name>
    <dbReference type="NCBI Taxonomy" id="323098"/>
    <lineage>
        <taxon>Bacteria</taxon>
        <taxon>Pseudomonadati</taxon>
        <taxon>Pseudomonadota</taxon>
        <taxon>Alphaproteobacteria</taxon>
        <taxon>Hyphomicrobiales</taxon>
        <taxon>Nitrobacteraceae</taxon>
        <taxon>Nitrobacter</taxon>
    </lineage>
</organism>
<proteinExistence type="inferred from homology"/>
<name>ANMK_NITWN</name>
<keyword id="KW-0067">ATP-binding</keyword>
<keyword id="KW-0119">Carbohydrate metabolism</keyword>
<keyword id="KW-0418">Kinase</keyword>
<keyword id="KW-0547">Nucleotide-binding</keyword>
<keyword id="KW-1185">Reference proteome</keyword>
<keyword id="KW-0808">Transferase</keyword>
<dbReference type="EC" id="2.7.1.170" evidence="1"/>
<dbReference type="EMBL" id="CP000115">
    <property type="protein sequence ID" value="ABA04928.1"/>
    <property type="molecule type" value="Genomic_DNA"/>
</dbReference>
<dbReference type="RefSeq" id="WP_011314927.1">
    <property type="nucleotide sequence ID" value="NC_007406.1"/>
</dbReference>
<dbReference type="SMR" id="Q3SS13"/>
<dbReference type="STRING" id="323098.Nwi_1667"/>
<dbReference type="KEGG" id="nwi:Nwi_1667"/>
<dbReference type="eggNOG" id="COG2377">
    <property type="taxonomic scope" value="Bacteria"/>
</dbReference>
<dbReference type="HOGENOM" id="CLU_038782_3_0_5"/>
<dbReference type="OrthoDB" id="9763949at2"/>
<dbReference type="UniPathway" id="UPA00343"/>
<dbReference type="UniPathway" id="UPA00544"/>
<dbReference type="Proteomes" id="UP000002531">
    <property type="component" value="Chromosome"/>
</dbReference>
<dbReference type="GO" id="GO:0005524">
    <property type="term" value="F:ATP binding"/>
    <property type="evidence" value="ECO:0007669"/>
    <property type="project" value="UniProtKB-UniRule"/>
</dbReference>
<dbReference type="GO" id="GO:0016301">
    <property type="term" value="F:kinase activity"/>
    <property type="evidence" value="ECO:0007669"/>
    <property type="project" value="UniProtKB-KW"/>
</dbReference>
<dbReference type="GO" id="GO:0016773">
    <property type="term" value="F:phosphotransferase activity, alcohol group as acceptor"/>
    <property type="evidence" value="ECO:0007669"/>
    <property type="project" value="UniProtKB-UniRule"/>
</dbReference>
<dbReference type="GO" id="GO:0097175">
    <property type="term" value="P:1,6-anhydro-N-acetyl-beta-muramic acid catabolic process"/>
    <property type="evidence" value="ECO:0007669"/>
    <property type="project" value="UniProtKB-UniRule"/>
</dbReference>
<dbReference type="GO" id="GO:0006040">
    <property type="term" value="P:amino sugar metabolic process"/>
    <property type="evidence" value="ECO:0007669"/>
    <property type="project" value="InterPro"/>
</dbReference>
<dbReference type="GO" id="GO:0009254">
    <property type="term" value="P:peptidoglycan turnover"/>
    <property type="evidence" value="ECO:0007669"/>
    <property type="project" value="UniProtKB-UniRule"/>
</dbReference>
<dbReference type="Gene3D" id="3.30.420.40">
    <property type="match status" value="2"/>
</dbReference>
<dbReference type="HAMAP" id="MF_01270">
    <property type="entry name" value="AnhMurNAc_kinase"/>
    <property type="match status" value="1"/>
</dbReference>
<dbReference type="InterPro" id="IPR005338">
    <property type="entry name" value="Anhydro_N_Ac-Mur_kinase"/>
</dbReference>
<dbReference type="InterPro" id="IPR043129">
    <property type="entry name" value="ATPase_NBD"/>
</dbReference>
<dbReference type="NCBIfam" id="NF007141">
    <property type="entry name" value="PRK09585.1-5"/>
    <property type="match status" value="1"/>
</dbReference>
<dbReference type="PANTHER" id="PTHR30605">
    <property type="entry name" value="ANHYDRO-N-ACETYLMURAMIC ACID KINASE"/>
    <property type="match status" value="1"/>
</dbReference>
<dbReference type="PANTHER" id="PTHR30605:SF0">
    <property type="entry name" value="ANHYDRO-N-ACETYLMURAMIC ACID KINASE"/>
    <property type="match status" value="1"/>
</dbReference>
<dbReference type="Pfam" id="PF03702">
    <property type="entry name" value="AnmK"/>
    <property type="match status" value="1"/>
</dbReference>
<dbReference type="SUPFAM" id="SSF53067">
    <property type="entry name" value="Actin-like ATPase domain"/>
    <property type="match status" value="1"/>
</dbReference>
<reference key="1">
    <citation type="journal article" date="2006" name="Appl. Environ. Microbiol.">
        <title>Genome sequence of the chemolithoautotrophic nitrite-oxidizing bacterium Nitrobacter winogradskyi Nb-255.</title>
        <authorList>
            <person name="Starkenburg S.R."/>
            <person name="Chain P.S.G."/>
            <person name="Sayavedra-Soto L.A."/>
            <person name="Hauser L."/>
            <person name="Land M.L."/>
            <person name="Larimer F.W."/>
            <person name="Malfatti S.A."/>
            <person name="Klotz M.G."/>
            <person name="Bottomley P.J."/>
            <person name="Arp D.J."/>
            <person name="Hickey W.J."/>
        </authorList>
    </citation>
    <scope>NUCLEOTIDE SEQUENCE [LARGE SCALE GENOMIC DNA]</scope>
    <source>
        <strain>ATCC 25391 / DSM 10237 / CIP 104748 / NCIMB 11846 / Nb-255</strain>
    </source>
</reference>
<comment type="function">
    <text evidence="1">Catalyzes the specific phosphorylation of 1,6-anhydro-N-acetylmuramic acid (anhMurNAc) with the simultaneous cleavage of the 1,6-anhydro ring, generating MurNAc-6-P. Is required for the utilization of anhMurNAc either imported from the medium or derived from its own cell wall murein, and thus plays a role in cell wall recycling.</text>
</comment>
<comment type="catalytic activity">
    <reaction evidence="1">
        <text>1,6-anhydro-N-acetyl-beta-muramate + ATP + H2O = N-acetyl-D-muramate 6-phosphate + ADP + H(+)</text>
        <dbReference type="Rhea" id="RHEA:24952"/>
        <dbReference type="ChEBI" id="CHEBI:15377"/>
        <dbReference type="ChEBI" id="CHEBI:15378"/>
        <dbReference type="ChEBI" id="CHEBI:30616"/>
        <dbReference type="ChEBI" id="CHEBI:58690"/>
        <dbReference type="ChEBI" id="CHEBI:58722"/>
        <dbReference type="ChEBI" id="CHEBI:456216"/>
        <dbReference type="EC" id="2.7.1.170"/>
    </reaction>
</comment>
<comment type="pathway">
    <text evidence="1">Amino-sugar metabolism; 1,6-anhydro-N-acetylmuramate degradation.</text>
</comment>
<comment type="pathway">
    <text evidence="1">Cell wall biogenesis; peptidoglycan recycling.</text>
</comment>
<comment type="similarity">
    <text evidence="1">Belongs to the anhydro-N-acetylmuramic acid kinase family.</text>
</comment>
<sequence>MMTAIGMMSGTSLDGVDVALIETDGERVTAFGPTGYRPYTNDERGLLREALAEAVNLTRRDARPGVIGMAEHAVTMAHSDAVTSFLARNGIRREDIDIVGFHGQTVLHRPGERLTVQIGDADALAKAIRVPVMHDFRAADVAAGGQGAPFVPAYHRALAQSLGRDGPICVVNIGGVSNVTYIDGADTLIACDTGPGNALLDDFMLRTTGEPFDRDGRLAQQGRPDADWIASALNHPFFALPPPKSLDRNDFASLALPDRPPADGAATLTAFTAAAIARIVPLLPKAPERWIVAGGGARNPIMLEMLREKVAPAPVERADALGWSIDAMEAQAFGYLAARGLKGLPLSYPATTGVPVPMTGGVVTRP</sequence>
<gene>
    <name evidence="1" type="primary">anmK</name>
    <name type="ordered locus">Nwi_1667</name>
</gene>
<protein>
    <recommendedName>
        <fullName evidence="1">Anhydro-N-acetylmuramic acid kinase</fullName>
        <ecNumber evidence="1">2.7.1.170</ecNumber>
    </recommendedName>
    <alternativeName>
        <fullName evidence="1">AnhMurNAc kinase</fullName>
    </alternativeName>
</protein>
<evidence type="ECO:0000255" key="1">
    <source>
        <dbReference type="HAMAP-Rule" id="MF_01270"/>
    </source>
</evidence>